<keyword id="KW-0002">3D-structure</keyword>
<keyword id="KW-0119">Carbohydrate metabolism</keyword>
<keyword id="KW-1015">Disulfide bond</keyword>
<keyword id="KW-0325">Glycoprotein</keyword>
<keyword id="KW-0326">Glycosidase</keyword>
<keyword id="KW-0378">Hydrolase</keyword>
<keyword id="KW-0624">Polysaccharide degradation</keyword>
<keyword id="KW-1185">Reference proteome</keyword>
<keyword id="KW-0964">Secreted</keyword>
<keyword id="KW-0732">Signal</keyword>
<name>BGALA_ASPNC</name>
<evidence type="ECO:0000250" key="1"/>
<evidence type="ECO:0000255" key="2"/>
<evidence type="ECO:0000255" key="3">
    <source>
        <dbReference type="PROSITE-ProRule" id="PRU00498"/>
    </source>
</evidence>
<evidence type="ECO:0000269" key="4">
    <source>
    </source>
</evidence>
<evidence type="ECO:0000303" key="5">
    <source>
    </source>
</evidence>
<evidence type="ECO:0000305" key="6"/>
<evidence type="ECO:0000305" key="7">
    <source>
    </source>
</evidence>
<evidence type="ECO:0007744" key="8">
    <source>
        <dbReference type="PDB" id="5IFP"/>
    </source>
</evidence>
<evidence type="ECO:0007744" key="9">
    <source>
        <dbReference type="PDB" id="5JUV"/>
    </source>
</evidence>
<evidence type="ECO:0007829" key="10">
    <source>
        <dbReference type="PDB" id="5IFP"/>
    </source>
</evidence>
<evidence type="ECO:0007829" key="11">
    <source>
        <dbReference type="PDB" id="5MGD"/>
    </source>
</evidence>
<organism>
    <name type="scientific">Aspergillus niger (strain ATCC MYA-4892 / CBS 513.88 / FGSC A1513)</name>
    <dbReference type="NCBI Taxonomy" id="425011"/>
    <lineage>
        <taxon>Eukaryota</taxon>
        <taxon>Fungi</taxon>
        <taxon>Dikarya</taxon>
        <taxon>Ascomycota</taxon>
        <taxon>Pezizomycotina</taxon>
        <taxon>Eurotiomycetes</taxon>
        <taxon>Eurotiomycetidae</taxon>
        <taxon>Eurotiales</taxon>
        <taxon>Aspergillaceae</taxon>
        <taxon>Aspergillus</taxon>
        <taxon>Aspergillus subgen. Circumdati</taxon>
    </lineage>
</organism>
<proteinExistence type="evidence at protein level"/>
<dbReference type="EC" id="3.2.1.23" evidence="4"/>
<dbReference type="EMBL" id="AM269982">
    <property type="protein sequence ID" value="CAK44114.1"/>
    <property type="molecule type" value="Genomic_DNA"/>
</dbReference>
<dbReference type="PDB" id="5IFP">
    <property type="method" value="X-ray"/>
    <property type="resolution" value="1.71 A"/>
    <property type="chains" value="A=1-1007"/>
</dbReference>
<dbReference type="PDB" id="5IFT">
    <property type="method" value="X-ray"/>
    <property type="resolution" value="2.45 A"/>
    <property type="chains" value="A=1-1007"/>
</dbReference>
<dbReference type="PDB" id="5IHR">
    <property type="method" value="X-ray"/>
    <property type="resolution" value="2.40 A"/>
    <property type="chains" value="A=1-1007"/>
</dbReference>
<dbReference type="PDB" id="5JUV">
    <property type="method" value="X-ray"/>
    <property type="resolution" value="2.27 A"/>
    <property type="chains" value="A=1-1007"/>
</dbReference>
<dbReference type="PDB" id="5MGC">
    <property type="method" value="X-ray"/>
    <property type="resolution" value="2.30 A"/>
    <property type="chains" value="A=1-1007"/>
</dbReference>
<dbReference type="PDB" id="5MGD">
    <property type="method" value="X-ray"/>
    <property type="resolution" value="2.15 A"/>
    <property type="chains" value="A=1-1007"/>
</dbReference>
<dbReference type="PDBsum" id="5IFP"/>
<dbReference type="PDBsum" id="5IFT"/>
<dbReference type="PDBsum" id="5IHR"/>
<dbReference type="PDBsum" id="5JUV"/>
<dbReference type="PDBsum" id="5MGC"/>
<dbReference type="PDBsum" id="5MGD"/>
<dbReference type="SMR" id="A2QAN3"/>
<dbReference type="CAZy" id="GH35">
    <property type="family name" value="Glycoside Hydrolase Family 35"/>
</dbReference>
<dbReference type="GlyCosmos" id="A2QAN3">
    <property type="glycosylation" value="11 sites, No reported glycans"/>
</dbReference>
<dbReference type="iPTMnet" id="A2QAN3"/>
<dbReference type="EnsemblFungi" id="CAK44114">
    <property type="protein sequence ID" value="CAK44114"/>
    <property type="gene ID" value="An01g12150"/>
</dbReference>
<dbReference type="KEGG" id="ang:An01g12150"/>
<dbReference type="VEuPathDB" id="FungiDB:An01g12150"/>
<dbReference type="HOGENOM" id="CLU_005732_2_0_1"/>
<dbReference type="SABIO-RK" id="A2QAN3"/>
<dbReference type="Proteomes" id="UP000006706">
    <property type="component" value="Chromosome 2R"/>
</dbReference>
<dbReference type="GO" id="GO:0005576">
    <property type="term" value="C:extracellular region"/>
    <property type="evidence" value="ECO:0007669"/>
    <property type="project" value="UniProtKB-SubCell"/>
</dbReference>
<dbReference type="GO" id="GO:0004565">
    <property type="term" value="F:beta-galactosidase activity"/>
    <property type="evidence" value="ECO:0000314"/>
    <property type="project" value="UniProtKB"/>
</dbReference>
<dbReference type="GO" id="GO:0070492">
    <property type="term" value="F:oligosaccharide binding"/>
    <property type="evidence" value="ECO:0000314"/>
    <property type="project" value="UniProtKB"/>
</dbReference>
<dbReference type="GO" id="GO:0005975">
    <property type="term" value="P:carbohydrate metabolic process"/>
    <property type="evidence" value="ECO:0000315"/>
    <property type="project" value="AspGD"/>
</dbReference>
<dbReference type="GO" id="GO:0005990">
    <property type="term" value="P:lactose catabolic process"/>
    <property type="evidence" value="ECO:0000314"/>
    <property type="project" value="UniProtKB"/>
</dbReference>
<dbReference type="GO" id="GO:0000272">
    <property type="term" value="P:polysaccharide catabolic process"/>
    <property type="evidence" value="ECO:0007669"/>
    <property type="project" value="UniProtKB-KW"/>
</dbReference>
<dbReference type="FunFam" id="2.102.20.10:FF:000001">
    <property type="entry name" value="Beta-galactosidase A"/>
    <property type="match status" value="1"/>
</dbReference>
<dbReference type="FunFam" id="2.60.120.260:FF:000065">
    <property type="entry name" value="Beta-galactosidase A"/>
    <property type="match status" value="1"/>
</dbReference>
<dbReference type="FunFam" id="2.60.120.260:FF:000088">
    <property type="entry name" value="Beta-galactosidase A"/>
    <property type="match status" value="1"/>
</dbReference>
<dbReference type="FunFam" id="2.60.390.10:FF:000001">
    <property type="entry name" value="Beta-galactosidase A"/>
    <property type="match status" value="1"/>
</dbReference>
<dbReference type="FunFam" id="3.20.20.80:FF:000040">
    <property type="entry name" value="Beta-galactosidase A"/>
    <property type="match status" value="1"/>
</dbReference>
<dbReference type="Gene3D" id="2.102.20.10">
    <property type="entry name" value="Beta-galactosidase, domain 2"/>
    <property type="match status" value="1"/>
</dbReference>
<dbReference type="Gene3D" id="2.60.390.10">
    <property type="entry name" value="Beta-galactosidase, domain 3"/>
    <property type="match status" value="1"/>
</dbReference>
<dbReference type="Gene3D" id="2.60.120.260">
    <property type="entry name" value="Galactose-binding domain-like"/>
    <property type="match status" value="2"/>
</dbReference>
<dbReference type="Gene3D" id="3.20.20.80">
    <property type="entry name" value="Glycosidases"/>
    <property type="match status" value="1"/>
</dbReference>
<dbReference type="InterPro" id="IPR018954">
    <property type="entry name" value="Betagal_dom2"/>
</dbReference>
<dbReference type="InterPro" id="IPR037110">
    <property type="entry name" value="Betagal_dom2_sf"/>
</dbReference>
<dbReference type="InterPro" id="IPR025972">
    <property type="entry name" value="BetaGal_dom3"/>
</dbReference>
<dbReference type="InterPro" id="IPR036833">
    <property type="entry name" value="BetaGal_dom3_sf"/>
</dbReference>
<dbReference type="InterPro" id="IPR025300">
    <property type="entry name" value="BetaGal_jelly_roll_dom"/>
</dbReference>
<dbReference type="InterPro" id="IPR008979">
    <property type="entry name" value="Galactose-bd-like_sf"/>
</dbReference>
<dbReference type="InterPro" id="IPR031330">
    <property type="entry name" value="Gly_Hdrlase_35_cat"/>
</dbReference>
<dbReference type="InterPro" id="IPR019801">
    <property type="entry name" value="Glyco_hydro_35_CS"/>
</dbReference>
<dbReference type="InterPro" id="IPR001944">
    <property type="entry name" value="Glycoside_Hdrlase_35"/>
</dbReference>
<dbReference type="InterPro" id="IPR017853">
    <property type="entry name" value="Glycoside_hydrolase_SF"/>
</dbReference>
<dbReference type="PANTHER" id="PTHR23421">
    <property type="entry name" value="BETA-GALACTOSIDASE RELATED"/>
    <property type="match status" value="1"/>
</dbReference>
<dbReference type="Pfam" id="PF13364">
    <property type="entry name" value="BetaGal_ABD2"/>
    <property type="match status" value="2"/>
</dbReference>
<dbReference type="Pfam" id="PF10435">
    <property type="entry name" value="BetaGal_dom2"/>
    <property type="match status" value="1"/>
</dbReference>
<dbReference type="Pfam" id="PF13363">
    <property type="entry name" value="BetaGal_dom3"/>
    <property type="match status" value="1"/>
</dbReference>
<dbReference type="Pfam" id="PF01301">
    <property type="entry name" value="Glyco_hydro_35"/>
    <property type="match status" value="1"/>
</dbReference>
<dbReference type="PRINTS" id="PR00742">
    <property type="entry name" value="GLHYDRLASE35"/>
</dbReference>
<dbReference type="SMART" id="SM01029">
    <property type="entry name" value="BetaGal_dom2"/>
    <property type="match status" value="1"/>
</dbReference>
<dbReference type="SUPFAM" id="SSF51445">
    <property type="entry name" value="(Trans)glycosidases"/>
    <property type="match status" value="1"/>
</dbReference>
<dbReference type="SUPFAM" id="SSF117100">
    <property type="entry name" value="Beta-galactosidase LacA, domain 3"/>
    <property type="match status" value="1"/>
</dbReference>
<dbReference type="SUPFAM" id="SSF49785">
    <property type="entry name" value="Galactose-binding domain-like"/>
    <property type="match status" value="2"/>
</dbReference>
<dbReference type="SUPFAM" id="SSF51011">
    <property type="entry name" value="Glycosyl hydrolase domain"/>
    <property type="match status" value="1"/>
</dbReference>
<dbReference type="PROSITE" id="PS01182">
    <property type="entry name" value="GLYCOSYL_HYDROL_F35"/>
    <property type="match status" value="1"/>
</dbReference>
<sequence>MKLSSACAIALLAAQAAGASIKHRINGFTLTEHSDPAKRELLQKYVTWDDKSLFINGERIMIFSGEFHPFRLPVKELQLDIFQKVKALGFNCVSFYVDWALVEGKPGEYRADGIFDLEPFFDAASEAGIYLLARPGPYINAESSGGGFPGWLQRVNGTLRSSDKAYLDATDNYVSHVAATIAKYQITNGGPIILYQPENEYTSGCCGVEFPDPVYMQYVEDQARNAGVVIPLINNDASASGNNAPGTGKGAVDIYGHDSYPLGFDCANPTVWPSGDLPTNFRTLHLEQSPTTPYAIVEFQGGSYDPWGGPGFAACSELLNNEFERVFYKNDFSFQIAIMNLYMIFGGTNWGNLGYPNGYTSYDYGSAVTESRNITREKYSELKLLGNFAKVSPGYLTASPGNLTTSGYADTTDLTVTPLLGNSTGSFFVVRHSDYSSEESTSYKLRLPTSAGSVTIPQLGGTLTLNGRDSKIHVTDYNVSGTNIIYSTAEVFTWKKFADGKVLVLYGGAGEHHELAISTKSNVTVIEGSESGISSKQTSSSVVVGWDVSTTRRIIQVGDLKILLLDRNSAYNYWVPQLATDGTSPGFSTPEKVASSIIVKAGYLVRTAYLKGSGLYLTADFNATTSVEVIGVPSTAKNLFINGDKTSHTVDKNGIWSATVDYNAPDISLPSLKDLDWKYVDTLPEIQSSYDDSLWPAADLKQTKNTLRSLTTPTSLYSSDYGFHTGYLLYRGHFTATGNESTFAIDTQGGSAFGSSVWLNGTYLGSWTGLYANSDYNATYNLPQLQAGKTYVITVVIDNMGLEENWTVGEDLMKTPRGILNFLLAGRPSSAISWKLTGNLGGEDYEDKVRGPLNEGGLYAERQGFHQPEPPSQNWKSSSPLEGLSEAGIGFYSASFDLDLPKGWDVPLFLNIGNSTTPSPYRVQVYVNGYQYAKYISNIGPQTSFPVPEGILNYRGTNWLAVTLWALDSAGGKLESLELSYTTPVLTALGEVESVDQPKYKKRKGAY</sequence>
<reference key="1">
    <citation type="journal article" date="2007" name="Nat. Biotechnol.">
        <title>Genome sequencing and analysis of the versatile cell factory Aspergillus niger CBS 513.88.</title>
        <authorList>
            <person name="Pel H.J."/>
            <person name="de Winde J.H."/>
            <person name="Archer D.B."/>
            <person name="Dyer P.S."/>
            <person name="Hofmann G."/>
            <person name="Schaap P.J."/>
            <person name="Turner G."/>
            <person name="de Vries R.P."/>
            <person name="Albang R."/>
            <person name="Albermann K."/>
            <person name="Andersen M.R."/>
            <person name="Bendtsen J.D."/>
            <person name="Benen J.A.E."/>
            <person name="van den Berg M."/>
            <person name="Breestraat S."/>
            <person name="Caddick M.X."/>
            <person name="Contreras R."/>
            <person name="Cornell M."/>
            <person name="Coutinho P.M."/>
            <person name="Danchin E.G.J."/>
            <person name="Debets A.J.M."/>
            <person name="Dekker P."/>
            <person name="van Dijck P.W.M."/>
            <person name="van Dijk A."/>
            <person name="Dijkhuizen L."/>
            <person name="Driessen A.J.M."/>
            <person name="d'Enfert C."/>
            <person name="Geysens S."/>
            <person name="Goosen C."/>
            <person name="Groot G.S.P."/>
            <person name="de Groot P.W.J."/>
            <person name="Guillemette T."/>
            <person name="Henrissat B."/>
            <person name="Herweijer M."/>
            <person name="van den Hombergh J.P.T.W."/>
            <person name="van den Hondel C.A.M.J.J."/>
            <person name="van der Heijden R.T.J.M."/>
            <person name="van der Kaaij R.M."/>
            <person name="Klis F.M."/>
            <person name="Kools H.J."/>
            <person name="Kubicek C.P."/>
            <person name="van Kuyk P.A."/>
            <person name="Lauber J."/>
            <person name="Lu X."/>
            <person name="van der Maarel M.J.E.C."/>
            <person name="Meulenberg R."/>
            <person name="Menke H."/>
            <person name="Mortimer M.A."/>
            <person name="Nielsen J."/>
            <person name="Oliver S.G."/>
            <person name="Olsthoorn M."/>
            <person name="Pal K."/>
            <person name="van Peij N.N.M.E."/>
            <person name="Ram A.F.J."/>
            <person name="Rinas U."/>
            <person name="Roubos J.A."/>
            <person name="Sagt C.M.J."/>
            <person name="Schmoll M."/>
            <person name="Sun J."/>
            <person name="Ussery D."/>
            <person name="Varga J."/>
            <person name="Vervecken W."/>
            <person name="van de Vondervoort P.J.J."/>
            <person name="Wedler H."/>
            <person name="Woesten H.A.B."/>
            <person name="Zeng A.-P."/>
            <person name="van Ooyen A.J.J."/>
            <person name="Visser J."/>
            <person name="Stam H."/>
        </authorList>
    </citation>
    <scope>NUCLEOTIDE SEQUENCE [LARGE SCALE GENOMIC DNA]</scope>
    <source>
        <strain>ATCC MYA-4892 / CBS 513.88 / FGSC A1513</strain>
    </source>
</reference>
<reference key="2">
    <citation type="journal article" date="2017" name="FEBS J.">
        <title>Structural features of Aspergillus niger beta-galactosidase define its activity against glycoside linkages.</title>
        <authorList>
            <person name="Rico-Diaz A."/>
            <person name="Ramirez-Escudero M."/>
            <person name="Vizoso-Vazquez A."/>
            <person name="Cerdan M.E."/>
            <person name="Becerra M."/>
            <person name="Sanz-Aparicio J."/>
        </authorList>
    </citation>
    <scope>X-RAY CRYSTALLOGRAPHY (1.71 ANGSTROMS) OF WILD-TYPE AND MUTANT GLN-298 IN COMPLEXES WITH ALLOLACTOSE; 3-GALACTOSYL-GLUCOSE; 6-GALACTOSYL-GALACTOSE; 4-GALACTOSYL-LACTOSE AND 6-GALACTOSYL-LACTOSE</scope>
    <scope>FUNCTION</scope>
    <scope>CATALYTIC ACTIVITY</scope>
    <scope>BIOPHYSICOCHEMICAL PROPERTIES</scope>
    <scope>MISCELLANEOUS</scope>
    <scope>REGIONS</scope>
    <scope>ACTIVE SITE</scope>
    <scope>GLYCOSYLATION AT ASN-156; ASN-402; ASN-478; ASN-522; ASN-622; ASN-739; ASN-760; ASN-777 AND ASN-914</scope>
    <scope>DISULFIDE BONDS</scope>
    <scope>MUTAGENESIS OF GLU-298; TYR-304; TYR-355; ASN-357 AND TRP-806</scope>
</reference>
<gene>
    <name type="primary">lacA</name>
    <name type="ORF">An01g12150</name>
</gene>
<accession>A2QAN3</accession>
<feature type="signal peptide" evidence="2">
    <location>
        <begin position="1"/>
        <end position="18"/>
    </location>
</feature>
<feature type="chain" id="PRO_5000219458" description="Beta-galactosidase A" evidence="2">
    <location>
        <begin position="19"/>
        <end position="1007"/>
    </location>
</feature>
<feature type="active site" description="Proton donor" evidence="7">
    <location>
        <position position="200"/>
    </location>
</feature>
<feature type="active site" description="Nucleophile" evidence="4">
    <location>
        <position position="298"/>
    </location>
</feature>
<feature type="binding site" evidence="4 9">
    <location>
        <position position="96"/>
    </location>
    <ligand>
        <name>substrate</name>
    </ligand>
</feature>
<feature type="binding site" evidence="4 9">
    <location>
        <begin position="140"/>
        <end position="142"/>
    </location>
    <ligand>
        <name>substrate</name>
    </ligand>
</feature>
<feature type="binding site" evidence="4 9">
    <location>
        <position position="199"/>
    </location>
    <ligand>
        <name>substrate</name>
    </ligand>
</feature>
<feature type="binding site" evidence="4 9">
    <location>
        <position position="364"/>
    </location>
    <ligand>
        <name>substrate</name>
    </ligand>
</feature>
<feature type="glycosylation site" description="N-linked (GlcNAc...) asparagine" evidence="3 4 8">
    <location>
        <position position="156"/>
    </location>
</feature>
<feature type="glycosylation site" description="N-linked (GlcNAc...) asparagine" evidence="3 4 8">
    <location>
        <position position="402"/>
    </location>
</feature>
<feature type="glycosylation site" description="N-linked (GlcNAc...) asparagine" evidence="3">
    <location>
        <position position="422"/>
    </location>
</feature>
<feature type="glycosylation site" description="N-linked (GlcNAc...) asparagine" evidence="3 4 8">
    <location>
        <position position="478"/>
    </location>
</feature>
<feature type="glycosylation site" description="N-linked (GlcNAc...) asparagine" evidence="3 4 8">
    <location>
        <position position="522"/>
    </location>
</feature>
<feature type="glycosylation site" description="N-linked (GlcNAc...) asparagine" evidence="3 4 8">
    <location>
        <position position="622"/>
    </location>
</feature>
<feature type="glycosylation site" description="N-linked (GlcNAc...) asparagine" evidence="3 4 8">
    <location>
        <position position="739"/>
    </location>
</feature>
<feature type="glycosylation site" description="N-linked (GlcNAc...) asparagine" evidence="3 4 8">
    <location>
        <position position="760"/>
    </location>
</feature>
<feature type="glycosylation site" description="N-linked (GlcNAc...) asparagine" evidence="3 4 8">
    <location>
        <position position="777"/>
    </location>
</feature>
<feature type="glycosylation site" description="N-linked (GlcNAc...) asparagine" evidence="3">
    <location>
        <position position="805"/>
    </location>
</feature>
<feature type="glycosylation site" description="N-linked (GlcNAc...) asparagine" evidence="3 4 8">
    <location>
        <position position="914"/>
    </location>
</feature>
<feature type="disulfide bond" evidence="4 8">
    <location>
        <begin position="205"/>
        <end position="206"/>
    </location>
</feature>
<feature type="disulfide bond" evidence="4 8">
    <location>
        <begin position="266"/>
        <end position="315"/>
    </location>
</feature>
<feature type="mutagenesis site" description="Loss of hydrolytic activity." evidence="4">
    <original>E</original>
    <variation>Q</variation>
    <location>
        <position position="298"/>
    </location>
</feature>
<feature type="mutagenesis site" description="Nearly complete loss of hydrolytic activity against lactose compared to wild-type due to decreased substrate affinity." evidence="4">
    <original>Y</original>
    <variation>A</variation>
    <location>
        <position position="304"/>
    </location>
</feature>
<feature type="mutagenesis site" description="Over 33% increase of hydrolytic activity against lactose compared to wild-type. No effect on hydrolytic activity compared to wild-type; when associated with H-355 and G-357. 58% reduction in hydrolytic activity compared to wild-type; when associated with H-355, G-357 and F-806." evidence="4">
    <original>Y</original>
    <variation>F</variation>
    <location>
        <position position="304"/>
    </location>
</feature>
<feature type="mutagenesis site" description="No effect on hydrolytic activity compared to wild-type; when associated with F-304 and G-357. 58% reduction in hydrolytic activity compared to wild-type; when associated with F-304, G-357 and F-806." evidence="4">
    <original>Y</original>
    <variation>H</variation>
    <location>
        <position position="355"/>
    </location>
</feature>
<feature type="mutagenesis site" description="No effect on hydrolytic activity compared to wild-type; when associated with F-304 and H-355. 58% reduction in hydrolytic activity compared to wild-type; when associated with F-304, H-355 and F-806." evidence="4">
    <original>N</original>
    <variation>G</variation>
    <location>
        <position position="357"/>
    </location>
</feature>
<feature type="mutagenesis site" description="43% loss of hydrolytic activity against lactose compared to wild-type. 58% reduction in hydrolytic activity compared to wild-type; when associated with F-304, H-355 and G-357." evidence="4">
    <original>W</original>
    <variation>F</variation>
    <location>
        <position position="806"/>
    </location>
</feature>
<feature type="mutagenesis site" description="90% loss of hydrolytic activity against lactose compared to wild-type." evidence="4">
    <original>W</original>
    <variation>S</variation>
    <location>
        <position position="806"/>
    </location>
</feature>
<feature type="strand" evidence="10">
    <location>
        <begin position="44"/>
        <end position="48"/>
    </location>
</feature>
<feature type="strand" evidence="10">
    <location>
        <begin position="53"/>
        <end position="55"/>
    </location>
</feature>
<feature type="strand" evidence="10">
    <location>
        <begin position="58"/>
        <end position="60"/>
    </location>
</feature>
<feature type="strand" evidence="10">
    <location>
        <begin position="62"/>
        <end position="66"/>
    </location>
</feature>
<feature type="helix" evidence="10">
    <location>
        <begin position="69"/>
        <end position="71"/>
    </location>
</feature>
<feature type="helix" evidence="10">
    <location>
        <begin position="75"/>
        <end position="86"/>
    </location>
</feature>
<feature type="turn" evidence="10">
    <location>
        <begin position="87"/>
        <end position="89"/>
    </location>
</feature>
<feature type="strand" evidence="10">
    <location>
        <begin position="92"/>
        <end position="96"/>
    </location>
</feature>
<feature type="helix" evidence="10">
    <location>
        <begin position="99"/>
        <end position="102"/>
    </location>
</feature>
<feature type="helix" evidence="10">
    <location>
        <begin position="113"/>
        <end position="115"/>
    </location>
</feature>
<feature type="helix" evidence="10">
    <location>
        <begin position="118"/>
        <end position="127"/>
    </location>
</feature>
<feature type="strand" evidence="10">
    <location>
        <begin position="130"/>
        <end position="137"/>
    </location>
</feature>
<feature type="helix" evidence="10">
    <location>
        <begin position="144"/>
        <end position="147"/>
    </location>
</feature>
<feature type="helix" evidence="10">
    <location>
        <begin position="150"/>
        <end position="154"/>
    </location>
</feature>
<feature type="helix" evidence="10">
    <location>
        <begin position="164"/>
        <end position="183"/>
    </location>
</feature>
<feature type="helix" evidence="10">
    <location>
        <begin position="186"/>
        <end position="188"/>
    </location>
</feature>
<feature type="strand" evidence="10">
    <location>
        <begin position="190"/>
        <end position="199"/>
    </location>
</feature>
<feature type="helix" evidence="10">
    <location>
        <begin position="213"/>
        <end position="225"/>
    </location>
</feature>
<feature type="strand" evidence="10">
    <location>
        <begin position="236"/>
        <end position="239"/>
    </location>
</feature>
<feature type="strand" evidence="10">
    <location>
        <begin position="257"/>
        <end position="259"/>
    </location>
</feature>
<feature type="helix" evidence="10">
    <location>
        <begin position="281"/>
        <end position="288"/>
    </location>
</feature>
<feature type="strand" evidence="10">
    <location>
        <begin position="295"/>
        <end position="302"/>
    </location>
</feature>
<feature type="helix" evidence="10">
    <location>
        <begin position="312"/>
        <end position="318"/>
    </location>
</feature>
<feature type="helix" evidence="10">
    <location>
        <begin position="321"/>
        <end position="332"/>
    </location>
</feature>
<feature type="turn" evidence="10">
    <location>
        <begin position="333"/>
        <end position="335"/>
    </location>
</feature>
<feature type="strand" evidence="10">
    <location>
        <begin position="337"/>
        <end position="342"/>
    </location>
</feature>
<feature type="helix" evidence="10">
    <location>
        <begin position="350"/>
        <end position="352"/>
    </location>
</feature>
<feature type="helix" evidence="10">
    <location>
        <begin position="377"/>
        <end position="390"/>
    </location>
</feature>
<feature type="helix" evidence="10">
    <location>
        <begin position="394"/>
        <end position="397"/>
    </location>
</feature>
<feature type="strand" evidence="10">
    <location>
        <begin position="398"/>
        <end position="400"/>
    </location>
</feature>
<feature type="strand" evidence="10">
    <location>
        <begin position="404"/>
        <end position="410"/>
    </location>
</feature>
<feature type="strand" evidence="10">
    <location>
        <begin position="414"/>
        <end position="420"/>
    </location>
</feature>
<feature type="strand" evidence="11">
    <location>
        <begin position="422"/>
        <end position="424"/>
    </location>
</feature>
<feature type="strand" evidence="10">
    <location>
        <begin position="426"/>
        <end position="434"/>
    </location>
</feature>
<feature type="strand" evidence="10">
    <location>
        <begin position="440"/>
        <end position="443"/>
    </location>
</feature>
<feature type="strand" evidence="10">
    <location>
        <begin position="445"/>
        <end position="447"/>
    </location>
</feature>
<feature type="strand" evidence="10">
    <location>
        <begin position="454"/>
        <end position="456"/>
    </location>
</feature>
<feature type="strand" evidence="10">
    <location>
        <begin position="458"/>
        <end position="460"/>
    </location>
</feature>
<feature type="strand" evidence="10">
    <location>
        <begin position="463"/>
        <end position="468"/>
    </location>
</feature>
<feature type="strand" evidence="10">
    <location>
        <begin position="471"/>
        <end position="479"/>
    </location>
</feature>
<feature type="strand" evidence="10">
    <location>
        <begin position="482"/>
        <end position="497"/>
    </location>
</feature>
<feature type="strand" evidence="10">
    <location>
        <begin position="500"/>
        <end position="507"/>
    </location>
</feature>
<feature type="strand" evidence="10">
    <location>
        <begin position="512"/>
        <end position="518"/>
    </location>
</feature>
<feature type="strand" evidence="10">
    <location>
        <begin position="523"/>
        <end position="528"/>
    </location>
</feature>
<feature type="strand" evidence="10">
    <location>
        <begin position="534"/>
        <end position="537"/>
    </location>
</feature>
<feature type="strand" evidence="10">
    <location>
        <begin position="539"/>
        <end position="547"/>
    </location>
</feature>
<feature type="strand" evidence="10">
    <location>
        <begin position="553"/>
        <end position="557"/>
    </location>
</feature>
<feature type="strand" evidence="10">
    <location>
        <begin position="560"/>
        <end position="566"/>
    </location>
</feature>
<feature type="helix" evidence="10">
    <location>
        <begin position="567"/>
        <end position="570"/>
    </location>
</feature>
<feature type="strand" evidence="10">
    <location>
        <begin position="578"/>
        <end position="583"/>
    </location>
</feature>
<feature type="helix" evidence="10">
    <location>
        <begin position="590"/>
        <end position="594"/>
    </location>
</feature>
<feature type="strand" evidence="10">
    <location>
        <begin position="598"/>
        <end position="600"/>
    </location>
</feature>
<feature type="strand" evidence="10">
    <location>
        <begin position="602"/>
        <end position="611"/>
    </location>
</feature>
<feature type="strand" evidence="10">
    <location>
        <begin position="614"/>
        <end position="623"/>
    </location>
</feature>
<feature type="strand" evidence="10">
    <location>
        <begin position="625"/>
        <end position="631"/>
    </location>
</feature>
<feature type="strand" evidence="10">
    <location>
        <begin position="638"/>
        <end position="641"/>
    </location>
</feature>
<feature type="strand" evidence="10">
    <location>
        <begin position="644"/>
        <end position="646"/>
    </location>
</feature>
<feature type="strand" evidence="10">
    <location>
        <begin position="656"/>
        <end position="660"/>
    </location>
</feature>
<feature type="helix" evidence="10">
    <location>
        <begin position="672"/>
        <end position="674"/>
    </location>
</feature>
<feature type="strand" evidence="10">
    <location>
        <begin position="678"/>
        <end position="682"/>
    </location>
</feature>
<feature type="helix" evidence="10">
    <location>
        <begin position="684"/>
        <end position="686"/>
    </location>
</feature>
<feature type="strand" evidence="10">
    <location>
        <begin position="706"/>
        <end position="708"/>
    </location>
</feature>
<feature type="strand" evidence="10">
    <location>
        <begin position="711"/>
        <end position="714"/>
    </location>
</feature>
<feature type="helix" evidence="10">
    <location>
        <begin position="718"/>
        <end position="721"/>
    </location>
</feature>
<feature type="strand" evidence="10">
    <location>
        <begin position="728"/>
        <end position="735"/>
    </location>
</feature>
<feature type="strand" evidence="10">
    <location>
        <begin position="742"/>
        <end position="748"/>
    </location>
</feature>
<feature type="strand" evidence="10">
    <location>
        <begin position="755"/>
        <end position="759"/>
    </location>
</feature>
<feature type="strand" evidence="10">
    <location>
        <begin position="762"/>
        <end position="767"/>
    </location>
</feature>
<feature type="strand" evidence="10">
    <location>
        <begin position="774"/>
        <end position="781"/>
    </location>
</feature>
<feature type="strand" evidence="10">
    <location>
        <begin position="790"/>
        <end position="797"/>
    </location>
</feature>
<feature type="helix" evidence="10">
    <location>
        <begin position="812"/>
        <end position="814"/>
    </location>
</feature>
<feature type="strand" evidence="10">
    <location>
        <begin position="818"/>
        <end position="824"/>
    </location>
</feature>
<feature type="helix" evidence="10">
    <location>
        <begin position="829"/>
        <end position="831"/>
    </location>
</feature>
<feature type="strand" evidence="10">
    <location>
        <begin position="833"/>
        <end position="839"/>
    </location>
</feature>
<feature type="turn" evidence="10">
    <location>
        <begin position="840"/>
        <end position="843"/>
    </location>
</feature>
<feature type="turn" evidence="10">
    <location>
        <begin position="848"/>
        <end position="850"/>
    </location>
</feature>
<feature type="strand" evidence="10">
    <location>
        <begin position="852"/>
        <end position="854"/>
    </location>
</feature>
<feature type="helix" evidence="10">
    <location>
        <begin position="859"/>
        <end position="862"/>
    </location>
</feature>
<feature type="turn" evidence="10">
    <location>
        <begin position="863"/>
        <end position="866"/>
    </location>
</feature>
<feature type="strand" evidence="10">
    <location>
        <begin position="867"/>
        <end position="869"/>
    </location>
</feature>
<feature type="strand" evidence="10">
    <location>
        <begin position="875"/>
        <end position="877"/>
    </location>
</feature>
<feature type="turn" evidence="10">
    <location>
        <begin position="880"/>
        <end position="882"/>
    </location>
</feature>
<feature type="strand" evidence="10">
    <location>
        <begin position="884"/>
        <end position="899"/>
    </location>
</feature>
<feature type="strand" evidence="10">
    <location>
        <begin position="908"/>
        <end position="912"/>
    </location>
</feature>
<feature type="strand" evidence="10">
    <location>
        <begin position="921"/>
        <end position="927"/>
    </location>
</feature>
<feature type="strand" evidence="10">
    <location>
        <begin position="930"/>
        <end position="936"/>
    </location>
</feature>
<feature type="turn" evidence="10">
    <location>
        <begin position="937"/>
        <end position="939"/>
    </location>
</feature>
<feature type="strand" evidence="10">
    <location>
        <begin position="944"/>
        <end position="947"/>
    </location>
</feature>
<feature type="strand" evidence="10">
    <location>
        <begin position="955"/>
        <end position="966"/>
    </location>
</feature>
<feature type="strand" evidence="10">
    <location>
        <begin position="977"/>
        <end position="981"/>
    </location>
</feature>
<protein>
    <recommendedName>
        <fullName evidence="6">Beta-galactosidase A</fullName>
        <shortName evidence="5">An-beta-gal</shortName>
        <ecNumber evidence="4">3.2.1.23</ecNumber>
    </recommendedName>
    <alternativeName>
        <fullName>Lactase A</fullName>
    </alternativeName>
</protein>
<comment type="function">
    <text evidence="4">Cleaves beta-linked terminal galactosyl residues from gangliosides, glycoproteins, and glycosaminoglycans.</text>
</comment>
<comment type="catalytic activity">
    <reaction evidence="4">
        <text>Hydrolysis of terminal non-reducing beta-D-galactose residues in beta-D-galactosides.</text>
        <dbReference type="EC" id="3.2.1.23"/>
    </reaction>
</comment>
<comment type="biophysicochemical properties">
    <kinetics>
        <KM evidence="4">92.5 mM for lactose</KM>
        <text evidence="4">kcat is 214.9 sec(-1).</text>
    </kinetics>
</comment>
<comment type="subcellular location">
    <subcellularLocation>
        <location evidence="1">Secreted</location>
    </subcellularLocation>
</comment>
<comment type="miscellaneous">
    <text evidence="4">Mutants of this enzyme have improved transgalactosylation activity and can be used for galacto-oligosaccharides (GOS) production in vitro.</text>
</comment>
<comment type="similarity">
    <text evidence="6">Belongs to the glycosyl hydrolase 35 family.</text>
</comment>